<proteinExistence type="evidence at protein level"/>
<organism>
    <name type="scientific">Trypanosoma brucei brucei (strain 927/4 GUTat10.1)</name>
    <dbReference type="NCBI Taxonomy" id="185431"/>
    <lineage>
        <taxon>Eukaryota</taxon>
        <taxon>Discoba</taxon>
        <taxon>Euglenozoa</taxon>
        <taxon>Kinetoplastea</taxon>
        <taxon>Metakinetoplastina</taxon>
        <taxon>Trypanosomatida</taxon>
        <taxon>Trypanosomatidae</taxon>
        <taxon>Trypanosoma</taxon>
    </lineage>
</organism>
<accession>Q580S0</accession>
<accession>D6XEA9</accession>
<feature type="chain" id="PRO_0000431686" description="Intraflagellar transport protein 27 homolog">
    <location>
        <begin position="1"/>
        <end position="183"/>
    </location>
</feature>
<feature type="binding site" evidence="1">
    <location>
        <begin position="12"/>
        <end position="19"/>
    </location>
    <ligand>
        <name>GTP</name>
        <dbReference type="ChEBI" id="CHEBI:37565"/>
    </ligand>
</feature>
<feature type="binding site" evidence="1">
    <location>
        <begin position="63"/>
        <end position="67"/>
    </location>
    <ligand>
        <name>GTP</name>
        <dbReference type="ChEBI" id="CHEBI:37565"/>
    </ligand>
</feature>
<feature type="binding site" evidence="1">
    <location>
        <begin position="120"/>
        <end position="123"/>
    </location>
    <ligand>
        <name>GTP</name>
        <dbReference type="ChEBI" id="CHEBI:37565"/>
    </ligand>
</feature>
<feature type="mutagenesis site" description="GDP-locked, leading to impaired flagellum assembly. Unable to enter the flagellum and to interact with other IFT-B proteins.">
    <original>T</original>
    <variation>N</variation>
    <location>
        <position position="19"/>
    </location>
</feature>
<feature type="mutagenesis site" description="GTP-locked.">
    <original>Q</original>
    <variation>L</variation>
    <location>
        <position position="67"/>
    </location>
</feature>
<gene>
    <name evidence="4" type="ORF">Tb927.3.5550</name>
</gene>
<name>IFT27_TRYB2</name>
<sequence>MVNLRLQVAVVGAPTVGKTAFVQMLHSNGTTFPKNYLMTLGCDFIVKEVPVDDDNTVEMIIFDVSGQREYEPMVSSYLQNTAVFIVMYDVSNKVTFEACARWVNQVRTNSKESVGILIANKSDLSDKAEVTDRQGKDLANANKMKFYKISTLRGVGITEPIDEIARHYVDAYQKRIEQLTQMR</sequence>
<evidence type="ECO:0000250" key="1"/>
<evidence type="ECO:0000269" key="2">
    <source>
    </source>
</evidence>
<evidence type="ECO:0000305" key="3"/>
<evidence type="ECO:0000312" key="4">
    <source>
        <dbReference type="EMBL" id="AAX81064.1"/>
    </source>
</evidence>
<evidence type="ECO:0000312" key="5">
    <source>
        <dbReference type="Proteomes" id="UP000008524"/>
    </source>
</evidence>
<dbReference type="EMBL" id="AC093543">
    <property type="protein sequence ID" value="AAX81064.1"/>
    <property type="molecule type" value="Genomic_DNA"/>
</dbReference>
<dbReference type="EMBL" id="CP000066">
    <property type="protein sequence ID" value="AAZ10586.1"/>
    <property type="molecule type" value="Genomic_DNA"/>
</dbReference>
<dbReference type="SMR" id="Q580S0"/>
<dbReference type="STRING" id="185431.Q580S0"/>
<dbReference type="PaxDb" id="5691-AAZ10586"/>
<dbReference type="GeneID" id="3656495"/>
<dbReference type="KEGG" id="tbr:Tb927.3.5550"/>
<dbReference type="VEuPathDB" id="TriTrypDB:Tb927.3.5550"/>
<dbReference type="eggNOG" id="KOG0079">
    <property type="taxonomic scope" value="Eukaryota"/>
</dbReference>
<dbReference type="InParanoid" id="Q580S0"/>
<dbReference type="OMA" id="KMWGQPS"/>
<dbReference type="OrthoDB" id="265044at2759"/>
<dbReference type="Proteomes" id="UP000008524">
    <property type="component" value="Chromosome 3"/>
</dbReference>
<dbReference type="GO" id="GO:0036064">
    <property type="term" value="C:ciliary basal body"/>
    <property type="evidence" value="ECO:0000314"/>
    <property type="project" value="GeneDB"/>
</dbReference>
<dbReference type="GO" id="GO:0005929">
    <property type="term" value="C:cilium"/>
    <property type="evidence" value="ECO:0000314"/>
    <property type="project" value="GeneDB"/>
</dbReference>
<dbReference type="GO" id="GO:0005737">
    <property type="term" value="C:cytoplasm"/>
    <property type="evidence" value="ECO:0000314"/>
    <property type="project" value="GeneDB"/>
</dbReference>
<dbReference type="GO" id="GO:0005768">
    <property type="term" value="C:endosome"/>
    <property type="evidence" value="ECO:0000318"/>
    <property type="project" value="GO_Central"/>
</dbReference>
<dbReference type="GO" id="GO:0005794">
    <property type="term" value="C:Golgi apparatus"/>
    <property type="evidence" value="ECO:0000318"/>
    <property type="project" value="GO_Central"/>
</dbReference>
<dbReference type="GO" id="GO:0030990">
    <property type="term" value="C:intraciliary transport particle"/>
    <property type="evidence" value="ECO:0000314"/>
    <property type="project" value="GeneDB"/>
</dbReference>
<dbReference type="GO" id="GO:0031514">
    <property type="term" value="C:motile cilium"/>
    <property type="evidence" value="ECO:0000314"/>
    <property type="project" value="UniProtKB"/>
</dbReference>
<dbReference type="GO" id="GO:0005525">
    <property type="term" value="F:GTP binding"/>
    <property type="evidence" value="ECO:0000255"/>
    <property type="project" value="GeneDB"/>
</dbReference>
<dbReference type="GO" id="GO:0003924">
    <property type="term" value="F:GTPase activity"/>
    <property type="evidence" value="ECO:0000255"/>
    <property type="project" value="GeneDB"/>
</dbReference>
<dbReference type="GO" id="GO:0035720">
    <property type="term" value="P:intraciliary anterograde transport"/>
    <property type="evidence" value="ECO:0000315"/>
    <property type="project" value="UniProtKB"/>
</dbReference>
<dbReference type="GO" id="GO:0035721">
    <property type="term" value="P:intraciliary retrograde transport"/>
    <property type="evidence" value="ECO:0000315"/>
    <property type="project" value="UniProtKB"/>
</dbReference>
<dbReference type="GO" id="GO:0035735">
    <property type="term" value="P:intraciliary transport involved in cilium assembly"/>
    <property type="evidence" value="ECO:0000315"/>
    <property type="project" value="GeneDB"/>
</dbReference>
<dbReference type="GO" id="GO:0015031">
    <property type="term" value="P:protein transport"/>
    <property type="evidence" value="ECO:0007669"/>
    <property type="project" value="UniProtKB-KW"/>
</dbReference>
<dbReference type="GO" id="GO:1902017">
    <property type="term" value="P:regulation of cilium assembly"/>
    <property type="evidence" value="ECO:0000315"/>
    <property type="project" value="GeneDB"/>
</dbReference>
<dbReference type="GO" id="GO:0007264">
    <property type="term" value="P:small GTPase-mediated signal transduction"/>
    <property type="evidence" value="ECO:0000255"/>
    <property type="project" value="GeneDB"/>
</dbReference>
<dbReference type="CDD" id="cd04101">
    <property type="entry name" value="RabL4"/>
    <property type="match status" value="1"/>
</dbReference>
<dbReference type="FunFam" id="3.40.50.300:FF:001684">
    <property type="entry name" value="Intraflagellar transport 27 homolog (Chlamydomonas)"/>
    <property type="match status" value="1"/>
</dbReference>
<dbReference type="Gene3D" id="3.40.50.300">
    <property type="entry name" value="P-loop containing nucleotide triphosphate hydrolases"/>
    <property type="match status" value="1"/>
</dbReference>
<dbReference type="InterPro" id="IPR027417">
    <property type="entry name" value="P-loop_NTPase"/>
</dbReference>
<dbReference type="InterPro" id="IPR034112">
    <property type="entry name" value="RabL4_euk"/>
</dbReference>
<dbReference type="InterPro" id="IPR005225">
    <property type="entry name" value="Small_GTP-bd"/>
</dbReference>
<dbReference type="InterPro" id="IPR001806">
    <property type="entry name" value="Small_GTPase"/>
</dbReference>
<dbReference type="NCBIfam" id="TIGR00231">
    <property type="entry name" value="small_GTP"/>
    <property type="match status" value="1"/>
</dbReference>
<dbReference type="PANTHER" id="PTHR47978">
    <property type="match status" value="1"/>
</dbReference>
<dbReference type="Pfam" id="PF00071">
    <property type="entry name" value="Ras"/>
    <property type="match status" value="1"/>
</dbReference>
<dbReference type="PRINTS" id="PR00449">
    <property type="entry name" value="RASTRNSFRMNG"/>
</dbReference>
<dbReference type="SMART" id="SM00175">
    <property type="entry name" value="RAB"/>
    <property type="match status" value="1"/>
</dbReference>
<dbReference type="SMART" id="SM00173">
    <property type="entry name" value="RAS"/>
    <property type="match status" value="1"/>
</dbReference>
<dbReference type="SMART" id="SM00174">
    <property type="entry name" value="RHO"/>
    <property type="match status" value="1"/>
</dbReference>
<dbReference type="SUPFAM" id="SSF52540">
    <property type="entry name" value="P-loop containing nucleoside triphosphate hydrolases"/>
    <property type="match status" value="1"/>
</dbReference>
<dbReference type="PROSITE" id="PS51419">
    <property type="entry name" value="RAB"/>
    <property type="match status" value="1"/>
</dbReference>
<reference key="1">
    <citation type="journal article" date="2005" name="Science">
        <title>The genome of the African trypanosome Trypanosoma brucei.</title>
        <authorList>
            <person name="Berriman M."/>
            <person name="Ghedin E."/>
            <person name="Hertz-Fowler C."/>
            <person name="Blandin G."/>
            <person name="Renauld H."/>
            <person name="Bartholomeu D.C."/>
            <person name="Lennard N.J."/>
            <person name="Caler E."/>
            <person name="Hamlin N.E."/>
            <person name="Haas B."/>
            <person name="Bohme U."/>
            <person name="Hannick L."/>
            <person name="Aslett M.A."/>
            <person name="Shallom J."/>
            <person name="Marcello L."/>
            <person name="Hou L."/>
            <person name="Wickstead B."/>
            <person name="Alsmark U.C.M."/>
            <person name="Arrowsmith C."/>
            <person name="Atkin R.J."/>
            <person name="Barron A.J."/>
            <person name="Bringaud F."/>
            <person name="Brooks K."/>
            <person name="Carrington M."/>
            <person name="Cherevach I."/>
            <person name="Chillingworth T.J."/>
            <person name="Churcher C."/>
            <person name="Clark L.N."/>
            <person name="Corton C.H."/>
            <person name="Cronin A."/>
            <person name="Davies R.M."/>
            <person name="Doggett J."/>
            <person name="Djikeng A."/>
            <person name="Feldblyum T."/>
            <person name="Field M.C."/>
            <person name="Fraser A."/>
            <person name="Goodhead I."/>
            <person name="Hance Z."/>
            <person name="Harper D."/>
            <person name="Harris B.R."/>
            <person name="Hauser H."/>
            <person name="Hostetler J."/>
            <person name="Ivens A."/>
            <person name="Jagels K."/>
            <person name="Johnson D."/>
            <person name="Johnson J."/>
            <person name="Jones K."/>
            <person name="Kerhornou A.X."/>
            <person name="Koo H."/>
            <person name="Larke N."/>
            <person name="Landfear S."/>
            <person name="Larkin C."/>
            <person name="Leech V."/>
            <person name="Line A."/>
            <person name="Lord A."/>
            <person name="Macleod A."/>
            <person name="Mooney P.J."/>
            <person name="Moule S."/>
            <person name="Martin D.M."/>
            <person name="Morgan G.W."/>
            <person name="Mungall K."/>
            <person name="Norbertczak H."/>
            <person name="Ormond D."/>
            <person name="Pai G."/>
            <person name="Peacock C.S."/>
            <person name="Peterson J."/>
            <person name="Quail M.A."/>
            <person name="Rabbinowitsch E."/>
            <person name="Rajandream M.A."/>
            <person name="Reitter C."/>
            <person name="Salzberg S.L."/>
            <person name="Sanders M."/>
            <person name="Schobel S."/>
            <person name="Sharp S."/>
            <person name="Simmonds M."/>
            <person name="Simpson A.J."/>
            <person name="Tallon L."/>
            <person name="Turner C.M."/>
            <person name="Tait A."/>
            <person name="Tivey A.R."/>
            <person name="Van Aken S."/>
            <person name="Walker D."/>
            <person name="Wanless D."/>
            <person name="Wang S."/>
            <person name="White B."/>
            <person name="White O."/>
            <person name="Whitehead S."/>
            <person name="Woodward J."/>
            <person name="Wortman J."/>
            <person name="Adams M.D."/>
            <person name="Embley T.M."/>
            <person name="Gull K."/>
            <person name="Ullu E."/>
            <person name="Barry J.D."/>
            <person name="Fairlamb A.H."/>
            <person name="Opperdoes F."/>
            <person name="Barrell B.G."/>
            <person name="Donelson J.E."/>
            <person name="Hall N."/>
            <person name="Fraser C.M."/>
            <person name="Melville S.E."/>
            <person name="El-Sayed N.M.A."/>
        </authorList>
    </citation>
    <scope>NUCLEOTIDE SEQUENCE [LARGE SCALE GENOMIC DNA]</scope>
    <source>
        <strain evidence="5">927/4 GUTat10.1</strain>
    </source>
</reference>
<reference key="2">
    <citation type="journal article" date="2014" name="Elife">
        <title>The GTPase IFT27 is involved in both anterograde and retrograde intraflagellar transport.</title>
        <authorList>
            <person name="Huet D."/>
            <person name="Blisnick T."/>
            <person name="Perrot S."/>
            <person name="Bastin P."/>
        </authorList>
    </citation>
    <scope>FUNCTION</scope>
    <scope>SUBCELLULAR LOCATION</scope>
    <scope>DEVELOPMENTAL STAGE</scope>
    <scope>MUTAGENESIS OF THR-19 AND GLN-67</scope>
</reference>
<comment type="function">
    <text evidence="2">Small GTPase-like component of the intraflagellar transport (IFT) complex B required for both anterograde and retrograde intraflagellar transport. May be involved in cargo loading of the retrograde transport.</text>
</comment>
<comment type="subunit">
    <text>Component of the IFT complex B.</text>
</comment>
<comment type="subcellular location">
    <subcellularLocation>
        <location evidence="2">Cell projection</location>
        <location evidence="2">Cilium</location>
        <location evidence="2">Flagellum</location>
    </subcellularLocation>
</comment>
<comment type="developmental stage">
    <text evidence="2">Expressed during procyclic stages.</text>
</comment>
<comment type="similarity">
    <text evidence="3">Belongs to the small GTPase superfamily. Rab family.</text>
</comment>
<keyword id="KW-0966">Cell projection</keyword>
<keyword id="KW-0969">Cilium</keyword>
<keyword id="KW-0282">Flagellum</keyword>
<keyword id="KW-0342">GTP-binding</keyword>
<keyword id="KW-0547">Nucleotide-binding</keyword>
<keyword id="KW-0653">Protein transport</keyword>
<keyword id="KW-1185">Reference proteome</keyword>
<keyword id="KW-0813">Transport</keyword>
<protein>
    <recommendedName>
        <fullName>Intraflagellar transport protein 27 homolog</fullName>
    </recommendedName>
</protein>